<organismHost>
    <name type="scientific">Oryctolagus cuniculus</name>
    <name type="common">Rabbit</name>
    <dbReference type="NCBI Taxonomy" id="9986"/>
</organismHost>
<keyword id="KW-1015">Disulfide bond</keyword>
<keyword id="KW-1168">Fusion of virus membrane with host membrane</keyword>
<keyword id="KW-0426">Late protein</keyword>
<keyword id="KW-0472">Membrane</keyword>
<keyword id="KW-0735">Signal-anchor</keyword>
<keyword id="KW-0812">Transmembrane</keyword>
<keyword id="KW-1133">Transmembrane helix</keyword>
<keyword id="KW-0261">Viral envelope protein</keyword>
<keyword id="KW-1162">Viral penetration into host cytoplasm</keyword>
<keyword id="KW-0946">Virion</keyword>
<keyword id="KW-1160">Virus entry into host cell</keyword>
<evidence type="ECO:0000250" key="1"/>
<evidence type="ECO:0000255" key="2"/>
<evidence type="ECO:0000305" key="3"/>
<sequence>MNPVTVFFVVVVTVAVCMILFQVYSIYLNYDNIKEFNAMHSPLEYSKMVNVTAIDRRVQDANDDIYDAKQKWRCVKFDDSYVSLSMFGYKADGVGIRRFRTLNGCIDYTFSTSTHSSILNPCIPPNDPKSRECTFLKSAL</sequence>
<reference key="1">
    <citation type="journal article" date="1996" name="J. Gen. Virol.">
        <title>Construction of recombinant myxoma viruses expressing foreign genes from different intergenic sites without associated attenuation.</title>
        <authorList>
            <person name="Jackson R.J."/>
            <person name="Hall D.F."/>
            <person name="Kerr P.J."/>
        </authorList>
    </citation>
    <scope>NUCLEOTIDE SEQUENCE [GENOMIC DNA]</scope>
</reference>
<name>A28_MYXVU</name>
<proteinExistence type="inferred from homology"/>
<organism>
    <name type="scientific">Myxoma virus (strain Uriarra)</name>
    <name type="common">MYXV</name>
    <dbReference type="NCBI Taxonomy" id="265876"/>
    <lineage>
        <taxon>Viruses</taxon>
        <taxon>Varidnaviria</taxon>
        <taxon>Bamfordvirae</taxon>
        <taxon>Nucleocytoviricota</taxon>
        <taxon>Pokkesviricetes</taxon>
        <taxon>Chitovirales</taxon>
        <taxon>Poxviridae</taxon>
        <taxon>Chordopoxvirinae</taxon>
        <taxon>Leporipoxvirus</taxon>
        <taxon>Myxoma virus</taxon>
    </lineage>
</organism>
<accession>P68549</accession>
<accession>Q83657</accession>
<dbReference type="EMBL" id="Z19600">
    <property type="protein sequence ID" value="CAA79662.1"/>
    <property type="molecule type" value="Genomic_DNA"/>
</dbReference>
<dbReference type="PIR" id="S31628">
    <property type="entry name" value="S31628"/>
</dbReference>
<dbReference type="SMR" id="P68549"/>
<dbReference type="KEGG" id="vg:932155"/>
<dbReference type="GO" id="GO:0016020">
    <property type="term" value="C:membrane"/>
    <property type="evidence" value="ECO:0007669"/>
    <property type="project" value="UniProtKB-KW"/>
</dbReference>
<dbReference type="GO" id="GO:0019031">
    <property type="term" value="C:viral envelope"/>
    <property type="evidence" value="ECO:0007669"/>
    <property type="project" value="UniProtKB-KW"/>
</dbReference>
<dbReference type="GO" id="GO:0055036">
    <property type="term" value="C:virion membrane"/>
    <property type="evidence" value="ECO:0007669"/>
    <property type="project" value="UniProtKB-SubCell"/>
</dbReference>
<dbReference type="GO" id="GO:0039663">
    <property type="term" value="P:membrane fusion involved in viral entry into host cell"/>
    <property type="evidence" value="ECO:0007669"/>
    <property type="project" value="UniProtKB-KW"/>
</dbReference>
<dbReference type="GO" id="GO:0046718">
    <property type="term" value="P:symbiont entry into host cell"/>
    <property type="evidence" value="ECO:0007669"/>
    <property type="project" value="UniProtKB-KW"/>
</dbReference>
<dbReference type="InterPro" id="IPR007664">
    <property type="entry name" value="Poxvirus_A28"/>
</dbReference>
<dbReference type="Pfam" id="PF04584">
    <property type="entry name" value="Pox_A28"/>
    <property type="match status" value="1"/>
</dbReference>
<protein>
    <recommendedName>
        <fullName>Envelope protein A28 homolog</fullName>
    </recommendedName>
    <alternativeName>
        <fullName>MA28</fullName>
    </alternativeName>
</protein>
<feature type="chain" id="PRO_0000099296" description="Envelope protein A28 homolog">
    <location>
        <begin position="1"/>
        <end position="140"/>
    </location>
</feature>
<feature type="transmembrane region" description="Helical; Signal-anchor for type II membrane protein" evidence="2">
    <location>
        <begin position="1"/>
        <end position="21"/>
    </location>
</feature>
<feature type="topological domain" description="Virion surface" evidence="2">
    <location>
        <begin position="22"/>
        <end position="140"/>
    </location>
</feature>
<comment type="function">
    <text evidence="1">Envelope protein required for virus entry into host cell and for cell-cell fusion (syncytium formation).</text>
</comment>
<comment type="subcellular location">
    <subcellularLocation>
        <location evidence="3">Virion membrane</location>
        <topology evidence="3">Single-pass type II membrane protein</topology>
    </subcellularLocation>
    <text evidence="1">Component of the intracellular mature virion (IMV) membrane.</text>
</comment>
<comment type="PTM">
    <text evidence="1">Contains two intramolecular disulfide bonds. They are created by the viral disulfide bond formation pathway, a poxvirus-specific pathway that operates on the cytoplasmic side of the MV membranes (By similarity).</text>
</comment>
<comment type="similarity">
    <text evidence="3">Belongs to the poxviridae A28 protein family.</text>
</comment>
<gene>
    <name type="ordered locus">MA28L</name>
</gene>